<accession>Q7B8C3</accession>
<name>AHLL_BACT3</name>
<organism>
    <name type="scientific">Bacillus thuringiensis subsp. indiana</name>
    <dbReference type="NCBI Taxonomy" id="180850"/>
    <lineage>
        <taxon>Bacteria</taxon>
        <taxon>Bacillati</taxon>
        <taxon>Bacillota</taxon>
        <taxon>Bacilli</taxon>
        <taxon>Bacillales</taxon>
        <taxon>Bacillaceae</taxon>
        <taxon>Bacillus</taxon>
        <taxon>Bacillus cereus group</taxon>
    </lineage>
</organism>
<evidence type="ECO:0000250" key="1">
    <source>
        <dbReference type="UniProtKB" id="Q7B8B9"/>
    </source>
</evidence>
<evidence type="ECO:0000305" key="2"/>
<evidence type="ECO:0000312" key="3">
    <source>
        <dbReference type="EMBL" id="AAM92131.1"/>
    </source>
</evidence>
<dbReference type="EC" id="3.1.1.81"/>
<dbReference type="EMBL" id="AF478050">
    <property type="protein sequence ID" value="AAM92131.1"/>
    <property type="molecule type" value="Genomic_DNA"/>
</dbReference>
<dbReference type="SMR" id="Q7B8C3"/>
<dbReference type="BRENDA" id="3.1.1.81">
    <property type="organism ID" value="711"/>
</dbReference>
<dbReference type="GO" id="GO:0102007">
    <property type="term" value="F:acyl-L-homoserine-lactone lactonohydrolase activity"/>
    <property type="evidence" value="ECO:0007669"/>
    <property type="project" value="UniProtKB-EC"/>
</dbReference>
<dbReference type="GO" id="GO:0046872">
    <property type="term" value="F:metal ion binding"/>
    <property type="evidence" value="ECO:0007669"/>
    <property type="project" value="UniProtKB-KW"/>
</dbReference>
<dbReference type="CDD" id="cd07729">
    <property type="entry name" value="AHL_lactonase_MBL-fold"/>
    <property type="match status" value="1"/>
</dbReference>
<dbReference type="FunFam" id="3.60.15.10:FF:000060">
    <property type="entry name" value="N-acyl homoserine lactonase AiiA"/>
    <property type="match status" value="1"/>
</dbReference>
<dbReference type="Gene3D" id="3.60.15.10">
    <property type="entry name" value="Ribonuclease Z/Hydroxyacylglutathione hydrolase-like"/>
    <property type="match status" value="1"/>
</dbReference>
<dbReference type="InterPro" id="IPR054870">
    <property type="entry name" value="AHLLactAiiA"/>
</dbReference>
<dbReference type="InterPro" id="IPR051013">
    <property type="entry name" value="MBL_superfamily_lactonases"/>
</dbReference>
<dbReference type="InterPro" id="IPR001279">
    <property type="entry name" value="Metallo-B-lactamas"/>
</dbReference>
<dbReference type="InterPro" id="IPR036866">
    <property type="entry name" value="RibonucZ/Hydroxyglut_hydro"/>
</dbReference>
<dbReference type="NCBIfam" id="NF045699">
    <property type="entry name" value="AHLLactAiiA"/>
    <property type="match status" value="1"/>
</dbReference>
<dbReference type="PANTHER" id="PTHR42978:SF7">
    <property type="entry name" value="METALLO-HYDROLASE RV2300C-RELATED"/>
    <property type="match status" value="1"/>
</dbReference>
<dbReference type="PANTHER" id="PTHR42978">
    <property type="entry name" value="QUORUM-QUENCHING LACTONASE YTNP-RELATED-RELATED"/>
    <property type="match status" value="1"/>
</dbReference>
<dbReference type="Pfam" id="PF00753">
    <property type="entry name" value="Lactamase_B"/>
    <property type="match status" value="1"/>
</dbReference>
<dbReference type="SMART" id="SM00849">
    <property type="entry name" value="Lactamase_B"/>
    <property type="match status" value="1"/>
</dbReference>
<dbReference type="SUPFAM" id="SSF56281">
    <property type="entry name" value="Metallo-hydrolase/oxidoreductase"/>
    <property type="match status" value="1"/>
</dbReference>
<keyword id="KW-0378">Hydrolase</keyword>
<keyword id="KW-0479">Metal-binding</keyword>
<keyword id="KW-0862">Zinc</keyword>
<protein>
    <recommendedName>
        <fullName evidence="1">N-acyl homoserine lactonase</fullName>
        <shortName evidence="1">AHL-lactonase</shortName>
        <ecNumber>3.1.1.81</ecNumber>
    </recommendedName>
</protein>
<sequence length="250" mass="28220">MTVKKLYFIPAGRCMLDHSSVNSALTPGKLLNLPVWCYLLETEEGPILVDTGMPESAVNNEGLFNGTFVEGQILPKMTEEDRIVNILKRVGYEPDDLLYIISSHLHFDHAGGNGAFTNTPIIVQRTEYEAALHREEYMKECILPHLNYKIIEGDYEVVPGVQLLYTPGHSPGHQSLFIETEQSGSVLLTIDASYTKENFEDEVPFAGFDPELALSSIKRLKEVVKKEKPIIFFGHDIEQEKSCRVFPEYI</sequence>
<reference evidence="3" key="1">
    <citation type="journal article" date="2002" name="Appl. Environ. Microbiol.">
        <title>Genes encoding the N-acyl homoserine lactone-degrading enzyme are widespread in many subspecies of Bacillus thuringiensis.</title>
        <authorList>
            <person name="Lee S.J."/>
            <person name="Park S.Y."/>
            <person name="Lee J.J."/>
            <person name="Yum D.Y."/>
            <person name="Koo B.T."/>
            <person name="Lee J.K."/>
        </authorList>
    </citation>
    <scope>NUCLEOTIDE SEQUENCE [GENOMIC DNA]</scope>
    <source>
        <strain evidence="3">HD-521</strain>
    </source>
</reference>
<proteinExistence type="inferred from homology"/>
<feature type="chain" id="PRO_0000403300" description="N-acyl homoserine lactonase">
    <location>
        <begin position="1"/>
        <end position="250"/>
    </location>
</feature>
<feature type="binding site" evidence="1">
    <location>
        <position position="104"/>
    </location>
    <ligand>
        <name>Zn(2+)</name>
        <dbReference type="ChEBI" id="CHEBI:29105"/>
        <label>1</label>
    </ligand>
</feature>
<feature type="binding site" evidence="1">
    <location>
        <position position="106"/>
    </location>
    <ligand>
        <name>Zn(2+)</name>
        <dbReference type="ChEBI" id="CHEBI:29105"/>
        <label>1</label>
    </ligand>
</feature>
<feature type="binding site" evidence="1">
    <location>
        <position position="108"/>
    </location>
    <ligand>
        <name>Zn(2+)</name>
        <dbReference type="ChEBI" id="CHEBI:29105"/>
        <label>2</label>
    </ligand>
</feature>
<feature type="binding site" evidence="1">
    <location>
        <position position="109"/>
    </location>
    <ligand>
        <name>Zn(2+)</name>
        <dbReference type="ChEBI" id="CHEBI:29105"/>
        <label>2</label>
    </ligand>
</feature>
<feature type="binding site" evidence="1">
    <location>
        <position position="169"/>
    </location>
    <ligand>
        <name>Zn(2+)</name>
        <dbReference type="ChEBI" id="CHEBI:29105"/>
        <label>1</label>
    </ligand>
</feature>
<feature type="binding site" evidence="1">
    <location>
        <position position="191"/>
    </location>
    <ligand>
        <name>Zn(2+)</name>
        <dbReference type="ChEBI" id="CHEBI:29105"/>
        <label>1</label>
    </ligand>
</feature>
<feature type="binding site" evidence="1">
    <location>
        <position position="191"/>
    </location>
    <ligand>
        <name>Zn(2+)</name>
        <dbReference type="ChEBI" id="CHEBI:29105"/>
        <label>2</label>
    </ligand>
</feature>
<feature type="binding site" evidence="1">
    <location>
        <position position="235"/>
    </location>
    <ligand>
        <name>Zn(2+)</name>
        <dbReference type="ChEBI" id="CHEBI:29105"/>
        <label>2</label>
    </ligand>
</feature>
<comment type="function">
    <text evidence="1">Catalyzes hydrolysis of N-hexanoyl-(S)-homoserine lactone, but not the R-enantiomer. Hydrolyzes short- and long-chain N-acyl homoserine lactones with or without 3-oxo substitution at C3, has maximum activity on C10-AHL (By similarity).</text>
</comment>
<comment type="catalytic activity">
    <reaction evidence="1">
        <text>an N-acyl-L-homoserine lactone + H2O = an N-acyl-L-homoserine + H(+)</text>
        <dbReference type="Rhea" id="RHEA:22576"/>
        <dbReference type="ChEBI" id="CHEBI:15377"/>
        <dbReference type="ChEBI" id="CHEBI:15378"/>
        <dbReference type="ChEBI" id="CHEBI:55474"/>
        <dbReference type="ChEBI" id="CHEBI:58921"/>
        <dbReference type="EC" id="3.1.1.81"/>
    </reaction>
</comment>
<comment type="cofactor">
    <cofactor evidence="1">
        <name>Zn(2+)</name>
        <dbReference type="ChEBI" id="CHEBI:29105"/>
    </cofactor>
    <text evidence="1">Binds 2 Zn(2+) ions per subunit.</text>
</comment>
<comment type="subunit">
    <text evidence="1">Monomer.</text>
</comment>
<comment type="similarity">
    <text evidence="2">Belongs to the metallo-beta-lactamase superfamily.</text>
</comment>
<gene>
    <name evidence="3" type="primary">aiiA</name>
</gene>